<sequence>MRSQGTCDNAAAMSGILKRKFEDVDASSPCSSARESDDEVSSSESADSGDSVNPSTSNHFTPSSILKREKRLRTKNVHFSCVTVYYFTRRQGFTSVPSQGGSTLGMSSRHNSVRQYTLGEFAREQERLHREMLREHLREEKLNSLKLKMTKNGTVESEEASTLTVDDISDDDIDLDNTEVDEYFFLQPLPTKKRRALLRASGVKKIDVDEKHELRAIRLSREDCGCDCRVFCDPETCTCSLAGIKCQVDRMSFPCGCTKEGCSNTAGRIEFNPIRVRTHFLHTIMKLELEKNREQQTPTLNGCHGEISAHGPSMGPVAHSVEYSIADNFEIETEPQAAVLHLQEELDCQGDEEEEEEDGSSFCSGATDSSTQSLAPSESDEEEEEEEEEEEEEEEDDDDDKGDGFVEGLGAHTEVVPLPSVLCYSDGTAVHESHTKNASFYASSSTLYYQIDSHIPGTPSQLSDNYSERDTVKNGALSLVPYAMTPERFVDYARQAEEAYGASHYPAANPSVIVCCPTSENDSGVPCNPLYPEHRSNLPQVEFHSYLKGPAQEGFVSTLNGDSHISEHPAENPLSLAEKSRLHEECIQSPVVETVPV</sequence>
<comment type="function">
    <text evidence="2 3">Binds to the consensus sequence 5'-AGAGTG-3' and has transcriptional activator activity. Plays a role in apoptosis.</text>
</comment>
<comment type="subcellular location">
    <subcellularLocation>
        <location evidence="2 3">Nucleus</location>
    </subcellularLocation>
</comment>
<comment type="alternative products">
    <event type="alternative splicing"/>
    <isoform>
        <id>P59055-1</id>
        <name>1</name>
        <sequence type="displayed"/>
    </isoform>
    <isoform>
        <id>P59055-2</id>
        <name>2</name>
        <sequence type="described" ref="VSP_034260"/>
    </isoform>
</comment>
<comment type="tissue specificity">
    <text evidence="2 3">Detected only in the brain of 15 dpc, 18 dpc, newborn and P6 mice (at protein level).</text>
</comment>
<comment type="developmental stage">
    <text>Expressed during embryonic development and also detected a week after birth. Expression decreases by 14 days after birth and is not detected in the adult (at protein level).</text>
</comment>
<comment type="disruption phenotype">
    <text evidence="2">Mice display no obvious defects in development, hematopoiesis or T-cell function. Deletion of Axud1, Csnrp2 and Csnrp3 together causes partial neonatal lethality, suggesting that they have redundant functions.</text>
</comment>
<comment type="similarity">
    <text evidence="6">Belongs to the AXUD1 family.</text>
</comment>
<comment type="sequence caution" evidence="6">
    <conflict type="erroneous initiation">
        <sequence resource="EMBL-CDS" id="ABN14256"/>
    </conflict>
</comment>
<comment type="sequence caution" evidence="6">
    <conflict type="erroneous initiation">
        <sequence resource="EMBL-CDS" id="BAC30257"/>
    </conflict>
</comment>
<reference key="1">
    <citation type="journal article" date="2007" name="Gene">
        <title>Characterization of a novel mouse brain gene (mbu-1) identified by digital differential display.</title>
        <authorList>
            <person name="Yang H.L."/>
            <person name="Cho E.Y."/>
            <person name="Han K.H."/>
            <person name="Kim H."/>
            <person name="Kim S.J."/>
        </authorList>
    </citation>
    <scope>NUCLEOTIDE SEQUENCE [MRNA] (ISOFORM 1)</scope>
    <source>
        <strain>C57BL/6J</strain>
        <tissue>Brain</tissue>
    </source>
</reference>
<reference key="2">
    <citation type="journal article" date="2008" name="Biochem. Biophys. Res. Commun.">
        <title>Taip2 is a novel cell death-related gene expressed in the brain during development.</title>
        <authorList>
            <person name="Yamada K."/>
            <person name="Akiyama N."/>
            <person name="Yamada S."/>
            <person name="Tanaka H."/>
            <person name="Saito S."/>
            <person name="Hiraoka M."/>
            <person name="Kizaka-Kondoh S."/>
        </authorList>
    </citation>
    <scope>NUCLEOTIDE SEQUENCE [MRNA] (ISOFORM 2)</scope>
    <scope>FUNCTION</scope>
    <scope>SUBCELLULAR LOCATION</scope>
    <scope>TISSUE SPECIFICITY</scope>
    <source>
        <strain>BALB/cJ</strain>
        <tissue>Fetal brain</tissue>
    </source>
</reference>
<reference key="3">
    <citation type="journal article" date="2005" name="Science">
        <title>The transcriptional landscape of the mammalian genome.</title>
        <authorList>
            <person name="Carninci P."/>
            <person name="Kasukawa T."/>
            <person name="Katayama S."/>
            <person name="Gough J."/>
            <person name="Frith M.C."/>
            <person name="Maeda N."/>
            <person name="Oyama R."/>
            <person name="Ravasi T."/>
            <person name="Lenhard B."/>
            <person name="Wells C."/>
            <person name="Kodzius R."/>
            <person name="Shimokawa K."/>
            <person name="Bajic V.B."/>
            <person name="Brenner S.E."/>
            <person name="Batalov S."/>
            <person name="Forrest A.R."/>
            <person name="Zavolan M."/>
            <person name="Davis M.J."/>
            <person name="Wilming L.G."/>
            <person name="Aidinis V."/>
            <person name="Allen J.E."/>
            <person name="Ambesi-Impiombato A."/>
            <person name="Apweiler R."/>
            <person name="Aturaliya R.N."/>
            <person name="Bailey T.L."/>
            <person name="Bansal M."/>
            <person name="Baxter L."/>
            <person name="Beisel K.W."/>
            <person name="Bersano T."/>
            <person name="Bono H."/>
            <person name="Chalk A.M."/>
            <person name="Chiu K.P."/>
            <person name="Choudhary V."/>
            <person name="Christoffels A."/>
            <person name="Clutterbuck D.R."/>
            <person name="Crowe M.L."/>
            <person name="Dalla E."/>
            <person name="Dalrymple B.P."/>
            <person name="de Bono B."/>
            <person name="Della Gatta G."/>
            <person name="di Bernardo D."/>
            <person name="Down T."/>
            <person name="Engstrom P."/>
            <person name="Fagiolini M."/>
            <person name="Faulkner G."/>
            <person name="Fletcher C.F."/>
            <person name="Fukushima T."/>
            <person name="Furuno M."/>
            <person name="Futaki S."/>
            <person name="Gariboldi M."/>
            <person name="Georgii-Hemming P."/>
            <person name="Gingeras T.R."/>
            <person name="Gojobori T."/>
            <person name="Green R.E."/>
            <person name="Gustincich S."/>
            <person name="Harbers M."/>
            <person name="Hayashi Y."/>
            <person name="Hensch T.K."/>
            <person name="Hirokawa N."/>
            <person name="Hill D."/>
            <person name="Huminiecki L."/>
            <person name="Iacono M."/>
            <person name="Ikeo K."/>
            <person name="Iwama A."/>
            <person name="Ishikawa T."/>
            <person name="Jakt M."/>
            <person name="Kanapin A."/>
            <person name="Katoh M."/>
            <person name="Kawasawa Y."/>
            <person name="Kelso J."/>
            <person name="Kitamura H."/>
            <person name="Kitano H."/>
            <person name="Kollias G."/>
            <person name="Krishnan S.P."/>
            <person name="Kruger A."/>
            <person name="Kummerfeld S.K."/>
            <person name="Kurochkin I.V."/>
            <person name="Lareau L.F."/>
            <person name="Lazarevic D."/>
            <person name="Lipovich L."/>
            <person name="Liu J."/>
            <person name="Liuni S."/>
            <person name="McWilliam S."/>
            <person name="Madan Babu M."/>
            <person name="Madera M."/>
            <person name="Marchionni L."/>
            <person name="Matsuda H."/>
            <person name="Matsuzawa S."/>
            <person name="Miki H."/>
            <person name="Mignone F."/>
            <person name="Miyake S."/>
            <person name="Morris K."/>
            <person name="Mottagui-Tabar S."/>
            <person name="Mulder N."/>
            <person name="Nakano N."/>
            <person name="Nakauchi H."/>
            <person name="Ng P."/>
            <person name="Nilsson R."/>
            <person name="Nishiguchi S."/>
            <person name="Nishikawa S."/>
            <person name="Nori F."/>
            <person name="Ohara O."/>
            <person name="Okazaki Y."/>
            <person name="Orlando V."/>
            <person name="Pang K.C."/>
            <person name="Pavan W.J."/>
            <person name="Pavesi G."/>
            <person name="Pesole G."/>
            <person name="Petrovsky N."/>
            <person name="Piazza S."/>
            <person name="Reed J."/>
            <person name="Reid J.F."/>
            <person name="Ring B.Z."/>
            <person name="Ringwald M."/>
            <person name="Rost B."/>
            <person name="Ruan Y."/>
            <person name="Salzberg S.L."/>
            <person name="Sandelin A."/>
            <person name="Schneider C."/>
            <person name="Schoenbach C."/>
            <person name="Sekiguchi K."/>
            <person name="Semple C.A."/>
            <person name="Seno S."/>
            <person name="Sessa L."/>
            <person name="Sheng Y."/>
            <person name="Shibata Y."/>
            <person name="Shimada H."/>
            <person name="Shimada K."/>
            <person name="Silva D."/>
            <person name="Sinclair B."/>
            <person name="Sperling S."/>
            <person name="Stupka E."/>
            <person name="Sugiura K."/>
            <person name="Sultana R."/>
            <person name="Takenaka Y."/>
            <person name="Taki K."/>
            <person name="Tammoja K."/>
            <person name="Tan S.L."/>
            <person name="Tang S."/>
            <person name="Taylor M.S."/>
            <person name="Tegner J."/>
            <person name="Teichmann S.A."/>
            <person name="Ueda H.R."/>
            <person name="van Nimwegen E."/>
            <person name="Verardo R."/>
            <person name="Wei C.L."/>
            <person name="Yagi K."/>
            <person name="Yamanishi H."/>
            <person name="Zabarovsky E."/>
            <person name="Zhu S."/>
            <person name="Zimmer A."/>
            <person name="Hide W."/>
            <person name="Bult C."/>
            <person name="Grimmond S.M."/>
            <person name="Teasdale R.D."/>
            <person name="Liu E.T."/>
            <person name="Brusic V."/>
            <person name="Quackenbush J."/>
            <person name="Wahlestedt C."/>
            <person name="Mattick J.S."/>
            <person name="Hume D.A."/>
            <person name="Kai C."/>
            <person name="Sasaki D."/>
            <person name="Tomaru Y."/>
            <person name="Fukuda S."/>
            <person name="Kanamori-Katayama M."/>
            <person name="Suzuki M."/>
            <person name="Aoki J."/>
            <person name="Arakawa T."/>
            <person name="Iida J."/>
            <person name="Imamura K."/>
            <person name="Itoh M."/>
            <person name="Kato T."/>
            <person name="Kawaji H."/>
            <person name="Kawagashira N."/>
            <person name="Kawashima T."/>
            <person name="Kojima M."/>
            <person name="Kondo S."/>
            <person name="Konno H."/>
            <person name="Nakano K."/>
            <person name="Ninomiya N."/>
            <person name="Nishio T."/>
            <person name="Okada M."/>
            <person name="Plessy C."/>
            <person name="Shibata K."/>
            <person name="Shiraki T."/>
            <person name="Suzuki S."/>
            <person name="Tagami M."/>
            <person name="Waki K."/>
            <person name="Watahiki A."/>
            <person name="Okamura-Oho Y."/>
            <person name="Suzuki H."/>
            <person name="Kawai J."/>
            <person name="Hayashizaki Y."/>
        </authorList>
    </citation>
    <scope>NUCLEOTIDE SEQUENCE [LARGE SCALE MRNA] (ISOFORMS 1 AND 2)</scope>
    <source>
        <strain>C57BL/6J</strain>
        <tissue>Cerebellum</tissue>
        <tissue>Hypothalamus</tissue>
        <tissue>Visual cortex</tissue>
    </source>
</reference>
<reference key="4">
    <citation type="journal article" date="2009" name="PLoS Biol.">
        <title>Lineage-specific biology revealed by a finished genome assembly of the mouse.</title>
        <authorList>
            <person name="Church D.M."/>
            <person name="Goodstadt L."/>
            <person name="Hillier L.W."/>
            <person name="Zody M.C."/>
            <person name="Goldstein S."/>
            <person name="She X."/>
            <person name="Bult C.J."/>
            <person name="Agarwala R."/>
            <person name="Cherry J.L."/>
            <person name="DiCuccio M."/>
            <person name="Hlavina W."/>
            <person name="Kapustin Y."/>
            <person name="Meric P."/>
            <person name="Maglott D."/>
            <person name="Birtle Z."/>
            <person name="Marques A.C."/>
            <person name="Graves T."/>
            <person name="Zhou S."/>
            <person name="Teague B."/>
            <person name="Potamousis K."/>
            <person name="Churas C."/>
            <person name="Place M."/>
            <person name="Herschleb J."/>
            <person name="Runnheim R."/>
            <person name="Forrest D."/>
            <person name="Amos-Landgraf J."/>
            <person name="Schwartz D.C."/>
            <person name="Cheng Z."/>
            <person name="Lindblad-Toh K."/>
            <person name="Eichler E.E."/>
            <person name="Ponting C.P."/>
        </authorList>
    </citation>
    <scope>NUCLEOTIDE SEQUENCE [LARGE SCALE GENOMIC DNA]</scope>
    <source>
        <strain>C57BL/6J</strain>
    </source>
</reference>
<reference key="5">
    <citation type="journal article" date="2007" name="PLoS ONE">
        <title>Characterization of a family of novel cysteine- serine-rich nuclear proteins (CSRNP).</title>
        <authorList>
            <person name="Gingras S."/>
            <person name="Pelletier S."/>
            <person name="Boyd K."/>
            <person name="Ihle J.N."/>
        </authorList>
    </citation>
    <scope>FUNCTION</scope>
    <scope>SUBCELLULAR LOCATION</scope>
    <scope>TISSUE SPECIFICITY</scope>
    <scope>DISRUPTION PHENOTYPE</scope>
</reference>
<gene>
    <name type="primary">Csrnp3</name>
    <name type="synonym">Fam130a2</name>
    <name type="synonym">Mbu1</name>
    <name type="synonym">Taip2</name>
</gene>
<feature type="chain" id="PRO_0000114789" description="Cysteine/serine-rich nuclear protein 3">
    <location>
        <begin position="1"/>
        <end position="597"/>
    </location>
</feature>
<feature type="region of interest" description="Disordered" evidence="1">
    <location>
        <begin position="22"/>
        <end position="64"/>
    </location>
</feature>
<feature type="region of interest" description="Disordered" evidence="1">
    <location>
        <begin position="348"/>
        <end position="407"/>
    </location>
</feature>
<feature type="compositionally biased region" description="Low complexity" evidence="1">
    <location>
        <begin position="42"/>
        <end position="52"/>
    </location>
</feature>
<feature type="compositionally biased region" description="Polar residues" evidence="1">
    <location>
        <begin position="53"/>
        <end position="64"/>
    </location>
</feature>
<feature type="compositionally biased region" description="Acidic residues" evidence="1">
    <location>
        <begin position="348"/>
        <end position="359"/>
    </location>
</feature>
<feature type="compositionally biased region" description="Polar residues" evidence="1">
    <location>
        <begin position="361"/>
        <end position="376"/>
    </location>
</feature>
<feature type="compositionally biased region" description="Acidic residues" evidence="1">
    <location>
        <begin position="378"/>
        <end position="401"/>
    </location>
</feature>
<feature type="splice variant" id="VSP_034260" description="In isoform 2." evidence="4 5">
    <location>
        <begin position="1"/>
        <end position="12"/>
    </location>
</feature>
<feature type="sequence conflict" description="In Ref. 2; BAC16315." evidence="6" ref="2">
    <original>C</original>
    <variation>R</variation>
    <location>
        <position position="246"/>
    </location>
</feature>
<feature type="sequence conflict" description="In Ref. 2; BAC16315." evidence="6" ref="2">
    <original>H</original>
    <variation>R</variation>
    <location>
        <position position="304"/>
    </location>
</feature>
<name>CSRN3_MOUSE</name>
<evidence type="ECO:0000256" key="1">
    <source>
        <dbReference type="SAM" id="MobiDB-lite"/>
    </source>
</evidence>
<evidence type="ECO:0000269" key="2">
    <source>
    </source>
</evidence>
<evidence type="ECO:0000269" key="3">
    <source>
    </source>
</evidence>
<evidence type="ECO:0000303" key="4">
    <source>
    </source>
</evidence>
<evidence type="ECO:0000303" key="5">
    <source>
    </source>
</evidence>
<evidence type="ECO:0000305" key="6"/>
<protein>
    <recommendedName>
        <fullName>Cysteine/serine-rich nuclear protein 3</fullName>
        <shortName>CSRNP-3</shortName>
    </recommendedName>
    <alternativeName>
        <fullName>Protein FAM130A2</fullName>
    </alternativeName>
    <alternativeName>
        <fullName>TGF-beta-induced apoptosis protein 2</fullName>
        <shortName>TAIP-2</shortName>
    </alternativeName>
</protein>
<dbReference type="EMBL" id="EF210820">
    <property type="protein sequence ID" value="ABN14256.1"/>
    <property type="status" value="ALT_INIT"/>
    <property type="molecule type" value="mRNA"/>
</dbReference>
<dbReference type="EMBL" id="AB091688">
    <property type="protein sequence ID" value="BAC16315.1"/>
    <property type="molecule type" value="mRNA"/>
</dbReference>
<dbReference type="EMBL" id="AK039150">
    <property type="protein sequence ID" value="BAC30257.1"/>
    <property type="status" value="ALT_INIT"/>
    <property type="molecule type" value="mRNA"/>
</dbReference>
<dbReference type="EMBL" id="AK082649">
    <property type="protein sequence ID" value="BAC38559.1"/>
    <property type="molecule type" value="mRNA"/>
</dbReference>
<dbReference type="EMBL" id="AK158873">
    <property type="protein sequence ID" value="BAE34706.1"/>
    <property type="molecule type" value="mRNA"/>
</dbReference>
<dbReference type="EMBL" id="AL929230">
    <property type="status" value="NOT_ANNOTATED_CDS"/>
    <property type="molecule type" value="Genomic_DNA"/>
</dbReference>
<dbReference type="EMBL" id="AL935061">
    <property type="status" value="NOT_ANNOTATED_CDS"/>
    <property type="molecule type" value="Genomic_DNA"/>
</dbReference>
<dbReference type="CCDS" id="CCDS16074.2">
    <molecule id="P59055-1"/>
</dbReference>
<dbReference type="CCDS" id="CCDS71060.1">
    <molecule id="P59055-2"/>
</dbReference>
<dbReference type="RefSeq" id="NP_001277594.1">
    <molecule id="P59055-2"/>
    <property type="nucleotide sequence ID" value="NM_001290665.1"/>
</dbReference>
<dbReference type="RefSeq" id="NP_700458.3">
    <molecule id="P59055-1"/>
    <property type="nucleotide sequence ID" value="NM_153409.5"/>
</dbReference>
<dbReference type="RefSeq" id="NP_848749.2">
    <molecule id="P59055-1"/>
    <property type="nucleotide sequence ID" value="NM_178634.2"/>
</dbReference>
<dbReference type="RefSeq" id="XP_006500465.1">
    <property type="nucleotide sequence ID" value="XM_006500402.2"/>
</dbReference>
<dbReference type="RefSeq" id="XP_006500466.1">
    <property type="nucleotide sequence ID" value="XM_006500403.3"/>
</dbReference>
<dbReference type="RefSeq" id="XP_030108093.1">
    <molecule id="P59055-1"/>
    <property type="nucleotide sequence ID" value="XM_030252233.1"/>
</dbReference>
<dbReference type="RefSeq" id="XP_030108094.1">
    <molecule id="P59055-1"/>
    <property type="nucleotide sequence ID" value="XM_030252234.1"/>
</dbReference>
<dbReference type="RefSeq" id="XP_030108095.1">
    <molecule id="P59055-2"/>
    <property type="nucleotide sequence ID" value="XM_030252235.1"/>
</dbReference>
<dbReference type="RefSeq" id="XP_030108096.1">
    <molecule id="P59055-2"/>
    <property type="nucleotide sequence ID" value="XM_030252236.1"/>
</dbReference>
<dbReference type="RefSeq" id="XP_030108097.1">
    <molecule id="P59055-2"/>
    <property type="nucleotide sequence ID" value="XM_030252237.1"/>
</dbReference>
<dbReference type="RefSeq" id="XP_036018613.1">
    <molecule id="P59055-2"/>
    <property type="nucleotide sequence ID" value="XM_036162720.1"/>
</dbReference>
<dbReference type="BioGRID" id="218908">
    <property type="interactions" value="1"/>
</dbReference>
<dbReference type="FunCoup" id="P59055">
    <property type="interactions" value="1139"/>
</dbReference>
<dbReference type="STRING" id="10090.ENSMUSP00000117533"/>
<dbReference type="PhosphoSitePlus" id="P59055"/>
<dbReference type="PaxDb" id="10090-ENSMUSP00000117533"/>
<dbReference type="ProteomicsDB" id="283962">
    <molecule id="P59055-1"/>
</dbReference>
<dbReference type="ProteomicsDB" id="283963">
    <molecule id="P59055-2"/>
</dbReference>
<dbReference type="Antibodypedia" id="19202">
    <property type="antibodies" value="120 antibodies from 23 providers"/>
</dbReference>
<dbReference type="Ensembl" id="ENSMUST00000053910.10">
    <molecule id="P59055-1"/>
    <property type="protein sequence ID" value="ENSMUSP00000055719.4"/>
    <property type="gene ID" value="ENSMUSG00000044647.17"/>
</dbReference>
<dbReference type="Ensembl" id="ENSMUST00000112394.2">
    <molecule id="P59055-2"/>
    <property type="protein sequence ID" value="ENSMUSP00000108013.2"/>
    <property type="gene ID" value="ENSMUSG00000044647.17"/>
</dbReference>
<dbReference type="Ensembl" id="ENSMUST00000122912.8">
    <molecule id="P59055-1"/>
    <property type="protein sequence ID" value="ENSMUSP00000117533.2"/>
    <property type="gene ID" value="ENSMUSG00000044647.17"/>
</dbReference>
<dbReference type="Ensembl" id="ENSMUST00000145598.9">
    <molecule id="P59055-2"/>
    <property type="protein sequence ID" value="ENSMUSP00000135605.2"/>
    <property type="gene ID" value="ENSMUSG00000044647.17"/>
</dbReference>
<dbReference type="Ensembl" id="ENSMUST00000176109.8">
    <molecule id="P59055-2"/>
    <property type="protein sequence ID" value="ENSMUSP00000135019.2"/>
    <property type="gene ID" value="ENSMUSG00000044647.17"/>
</dbReference>
<dbReference type="GeneID" id="77771"/>
<dbReference type="KEGG" id="mmu:77771"/>
<dbReference type="UCSC" id="uc008jwq.2">
    <molecule id="P59055-1"/>
    <property type="organism name" value="mouse"/>
</dbReference>
<dbReference type="AGR" id="MGI:1925021"/>
<dbReference type="CTD" id="80034"/>
<dbReference type="MGI" id="MGI:1925021">
    <property type="gene designation" value="Csrnp3"/>
</dbReference>
<dbReference type="VEuPathDB" id="HostDB:ENSMUSG00000044647"/>
<dbReference type="eggNOG" id="KOG3813">
    <property type="taxonomic scope" value="Eukaryota"/>
</dbReference>
<dbReference type="GeneTree" id="ENSGT00950000183072"/>
<dbReference type="HOGENOM" id="CLU_034103_1_0_1"/>
<dbReference type="InParanoid" id="P59055"/>
<dbReference type="OMA" id="YYQLGGS"/>
<dbReference type="OrthoDB" id="5946974at2759"/>
<dbReference type="PhylomeDB" id="P59055"/>
<dbReference type="TreeFam" id="TF323969"/>
<dbReference type="BioGRID-ORCS" id="77771">
    <property type="hits" value="0 hits in 61 CRISPR screens"/>
</dbReference>
<dbReference type="ChiTaRS" id="Csrnp3">
    <property type="organism name" value="mouse"/>
</dbReference>
<dbReference type="PRO" id="PR:P59055"/>
<dbReference type="Proteomes" id="UP000000589">
    <property type="component" value="Chromosome 2"/>
</dbReference>
<dbReference type="RNAct" id="P59055">
    <property type="molecule type" value="protein"/>
</dbReference>
<dbReference type="Bgee" id="ENSMUSG00000044647">
    <property type="expression patterns" value="Expressed in subparaventricular zone and 143 other cell types or tissues"/>
</dbReference>
<dbReference type="ExpressionAtlas" id="P59055">
    <property type="expression patterns" value="baseline and differential"/>
</dbReference>
<dbReference type="GO" id="GO:0005634">
    <property type="term" value="C:nucleus"/>
    <property type="evidence" value="ECO:0000314"/>
    <property type="project" value="UniProtKB"/>
</dbReference>
<dbReference type="GO" id="GO:0001228">
    <property type="term" value="F:DNA-binding transcription activator activity, RNA polymerase II-specific"/>
    <property type="evidence" value="ECO:0000314"/>
    <property type="project" value="NTNU_SB"/>
</dbReference>
<dbReference type="GO" id="GO:0003700">
    <property type="term" value="F:DNA-binding transcription factor activity"/>
    <property type="evidence" value="ECO:0000314"/>
    <property type="project" value="UniProtKB"/>
</dbReference>
<dbReference type="GO" id="GO:0043565">
    <property type="term" value="F:sequence-specific DNA binding"/>
    <property type="evidence" value="ECO:0000314"/>
    <property type="project" value="NTNU_SB"/>
</dbReference>
<dbReference type="GO" id="GO:0006915">
    <property type="term" value="P:apoptotic process"/>
    <property type="evidence" value="ECO:0007669"/>
    <property type="project" value="UniProtKB-KW"/>
</dbReference>
<dbReference type="GO" id="GO:0043065">
    <property type="term" value="P:positive regulation of apoptotic process"/>
    <property type="evidence" value="ECO:0000314"/>
    <property type="project" value="UniProtKB"/>
</dbReference>
<dbReference type="GO" id="GO:0045944">
    <property type="term" value="P:positive regulation of transcription by RNA polymerase II"/>
    <property type="evidence" value="ECO:0000314"/>
    <property type="project" value="UniProtKB"/>
</dbReference>
<dbReference type="InterPro" id="IPR031972">
    <property type="entry name" value="CSRNP_N"/>
</dbReference>
<dbReference type="InterPro" id="IPR023260">
    <property type="entry name" value="Cys/Ser-rich_nuc_prot"/>
</dbReference>
<dbReference type="PANTHER" id="PTHR13580:SF13">
    <property type="entry name" value="CYSTEINE_SERINE-RICH NUCLEAR PROTEIN 3"/>
    <property type="match status" value="1"/>
</dbReference>
<dbReference type="PANTHER" id="PTHR13580">
    <property type="entry name" value="TGF-BETA INDUCED APOPTOSIS PROTEIN"/>
    <property type="match status" value="1"/>
</dbReference>
<dbReference type="Pfam" id="PF16019">
    <property type="entry name" value="CSRNP_N"/>
    <property type="match status" value="1"/>
</dbReference>
<dbReference type="PRINTS" id="PR02031">
    <property type="entry name" value="CYSSERRICHNP"/>
</dbReference>
<proteinExistence type="evidence at protein level"/>
<accession>P59055</accession>
<accession>A3F6Q4</accession>
<accession>Q8BUT9</accession>
<accession>Q8BYL1</accession>
<organism>
    <name type="scientific">Mus musculus</name>
    <name type="common">Mouse</name>
    <dbReference type="NCBI Taxonomy" id="10090"/>
    <lineage>
        <taxon>Eukaryota</taxon>
        <taxon>Metazoa</taxon>
        <taxon>Chordata</taxon>
        <taxon>Craniata</taxon>
        <taxon>Vertebrata</taxon>
        <taxon>Euteleostomi</taxon>
        <taxon>Mammalia</taxon>
        <taxon>Eutheria</taxon>
        <taxon>Euarchontoglires</taxon>
        <taxon>Glires</taxon>
        <taxon>Rodentia</taxon>
        <taxon>Myomorpha</taxon>
        <taxon>Muroidea</taxon>
        <taxon>Muridae</taxon>
        <taxon>Murinae</taxon>
        <taxon>Mus</taxon>
        <taxon>Mus</taxon>
    </lineage>
</organism>
<keyword id="KW-0010">Activator</keyword>
<keyword id="KW-0025">Alternative splicing</keyword>
<keyword id="KW-0053">Apoptosis</keyword>
<keyword id="KW-0238">DNA-binding</keyword>
<keyword id="KW-0539">Nucleus</keyword>
<keyword id="KW-1185">Reference proteome</keyword>
<keyword id="KW-0804">Transcription</keyword>
<keyword id="KW-0805">Transcription regulation</keyword>